<proteinExistence type="inferred from homology"/>
<protein>
    <recommendedName>
        <fullName>Alkaline phosphatase-like protein</fullName>
    </recommendedName>
</protein>
<name>APL_LACLM</name>
<evidence type="ECO:0000255" key="1"/>
<evidence type="ECO:0000305" key="2"/>
<dbReference type="EMBL" id="Z29065">
    <property type="protein sequence ID" value="CAA82306.1"/>
    <property type="status" value="ALT_FRAME"/>
    <property type="molecule type" value="Genomic_DNA"/>
</dbReference>
<dbReference type="EMBL" id="AM406671">
    <property type="protein sequence ID" value="CAL98425.1"/>
    <property type="molecule type" value="Genomic_DNA"/>
</dbReference>
<dbReference type="PIR" id="S39339">
    <property type="entry name" value="S39339"/>
</dbReference>
<dbReference type="RefSeq" id="WP_011835619.1">
    <property type="nucleotide sequence ID" value="NC_009004.1"/>
</dbReference>
<dbReference type="STRING" id="416870.llmg_1854"/>
<dbReference type="GeneID" id="61108971"/>
<dbReference type="KEGG" id="llm:llmg_1854"/>
<dbReference type="eggNOG" id="COG0586">
    <property type="taxonomic scope" value="Bacteria"/>
</dbReference>
<dbReference type="HOGENOM" id="CLU_044208_1_1_9"/>
<dbReference type="OrthoDB" id="9813426at2"/>
<dbReference type="PhylomeDB" id="Q48630"/>
<dbReference type="Proteomes" id="UP000000364">
    <property type="component" value="Chromosome"/>
</dbReference>
<dbReference type="GO" id="GO:0005886">
    <property type="term" value="C:plasma membrane"/>
    <property type="evidence" value="ECO:0007669"/>
    <property type="project" value="UniProtKB-SubCell"/>
</dbReference>
<dbReference type="InterPro" id="IPR051311">
    <property type="entry name" value="DedA_domain"/>
</dbReference>
<dbReference type="InterPro" id="IPR032816">
    <property type="entry name" value="VTT_dom"/>
</dbReference>
<dbReference type="PANTHER" id="PTHR42709">
    <property type="entry name" value="ALKALINE PHOSPHATASE LIKE PROTEIN"/>
    <property type="match status" value="1"/>
</dbReference>
<dbReference type="PANTHER" id="PTHR42709:SF6">
    <property type="entry name" value="UNDECAPRENYL PHOSPHATE TRANSPORTER A"/>
    <property type="match status" value="1"/>
</dbReference>
<dbReference type="Pfam" id="PF09335">
    <property type="entry name" value="VTT_dom"/>
    <property type="match status" value="1"/>
</dbReference>
<reference key="1">
    <citation type="submission" date="1993-12" db="EMBL/GenBank/DDBJ databases">
        <title>Cloning and sequencing of a gene (apl) from Lactococcus lactis that can complement a phoA mutation in Escherichia coli.</title>
        <authorList>
            <person name="Venema K."/>
            <person name="Haandrikman A."/>
            <person name="Leenhouts K."/>
            <person name="Kok J."/>
            <person name="Venema G."/>
        </authorList>
    </citation>
    <scope>NUCLEOTIDE SEQUENCE [GENOMIC DNA]</scope>
</reference>
<reference key="2">
    <citation type="journal article" date="2007" name="J. Bacteriol.">
        <title>The complete genome sequence of the lactic acid bacterial paradigm Lactococcus lactis subsp. cremoris MG1363.</title>
        <authorList>
            <person name="Wegmann U."/>
            <person name="O'Connell-Motherway M."/>
            <person name="Zomer A."/>
            <person name="Buist G."/>
            <person name="Shearman C."/>
            <person name="Canchaya C."/>
            <person name="Ventura M."/>
            <person name="Goesmann A."/>
            <person name="Gasson M.J."/>
            <person name="Kuipers O.P."/>
            <person name="van Sinderen D."/>
            <person name="Kok J."/>
        </authorList>
    </citation>
    <scope>NUCLEOTIDE SEQUENCE [LARGE SCALE GENOMIC DNA]</scope>
    <source>
        <strain>MG1363</strain>
    </source>
</reference>
<organism>
    <name type="scientific">Lactococcus lactis subsp. cremoris (strain MG1363)</name>
    <dbReference type="NCBI Taxonomy" id="416870"/>
    <lineage>
        <taxon>Bacteria</taxon>
        <taxon>Bacillati</taxon>
        <taxon>Bacillota</taxon>
        <taxon>Bacilli</taxon>
        <taxon>Lactobacillales</taxon>
        <taxon>Streptococcaceae</taxon>
        <taxon>Lactococcus</taxon>
        <taxon>Lactococcus cremoris subsp. cremoris</taxon>
    </lineage>
</organism>
<accession>Q48630</accession>
<accession>A2RM98</accession>
<keyword id="KW-1003">Cell membrane</keyword>
<keyword id="KW-0472">Membrane</keyword>
<keyword id="KW-0812">Transmembrane</keyword>
<keyword id="KW-1133">Transmembrane helix</keyword>
<comment type="subcellular location">
    <subcellularLocation>
        <location evidence="2">Cell membrane</location>
        <topology evidence="2">Multi-pass membrane protein</topology>
    </subcellularLocation>
</comment>
<comment type="similarity">
    <text evidence="2">Belongs to the DedA family.</text>
</comment>
<comment type="sequence caution" evidence="2">
    <conflict type="frameshift">
        <sequence resource="EMBL-CDS" id="CAA82306"/>
    </conflict>
</comment>
<sequence>MQEIIIQVMNQFGYFGVAFLIMIENIFPPIPSEVILTFGGFMTTYSELGIIGMIIAATIGSVLGALILYFVGRLLSVERLERLVSGRLGKVLRLKPEDITKAEKWFLKRGYATIFFCRFIPLIRSLISVPAGSAKMKLPSFLILTTLGTLIWNIVLVSLGAALGDNWEMIAGILDSYSSVVVAILGVIFILGLLLFVKKRFFPKNKNYSPDSEK</sequence>
<gene>
    <name type="primary">apl</name>
    <name type="ordered locus">llmg_1854</name>
</gene>
<feature type="chain" id="PRO_0000161409" description="Alkaline phosphatase-like protein">
    <location>
        <begin position="1"/>
        <end position="214"/>
    </location>
</feature>
<feature type="transmembrane region" description="Helical" evidence="1">
    <location>
        <begin position="3"/>
        <end position="23"/>
    </location>
</feature>
<feature type="transmembrane region" description="Helical" evidence="1">
    <location>
        <begin position="48"/>
        <end position="68"/>
    </location>
</feature>
<feature type="transmembrane region" description="Helical" evidence="1">
    <location>
        <begin position="141"/>
        <end position="161"/>
    </location>
</feature>
<feature type="transmembrane region" description="Helical" evidence="1">
    <location>
        <begin position="177"/>
        <end position="197"/>
    </location>
</feature>